<organism>
    <name type="scientific">Homo sapiens</name>
    <name type="common">Human</name>
    <dbReference type="NCBI Taxonomy" id="9606"/>
    <lineage>
        <taxon>Eukaryota</taxon>
        <taxon>Metazoa</taxon>
        <taxon>Chordata</taxon>
        <taxon>Craniata</taxon>
        <taxon>Vertebrata</taxon>
        <taxon>Euteleostomi</taxon>
        <taxon>Mammalia</taxon>
        <taxon>Eutheria</taxon>
        <taxon>Euarchontoglires</taxon>
        <taxon>Primates</taxon>
        <taxon>Haplorrhini</taxon>
        <taxon>Catarrhini</taxon>
        <taxon>Hominidae</taxon>
        <taxon>Homo</taxon>
    </lineage>
</organism>
<protein>
    <recommendedName>
        <fullName evidence="32">Cell adhesion molecule 1</fullName>
    </recommendedName>
    <alternativeName>
        <fullName>Immunoglobulin superfamily member 4</fullName>
        <shortName>IgSF4</shortName>
    </alternativeName>
    <alternativeName>
        <fullName>Nectin-like protein 2</fullName>
        <shortName>NECL-2</shortName>
    </alternativeName>
    <alternativeName>
        <fullName>Spermatogenic immunoglobulin superfamily</fullName>
        <shortName>SgIgSF</shortName>
    </alternativeName>
    <alternativeName>
        <fullName>Synaptic cell adhesion molecule</fullName>
        <shortName>SynCAM</shortName>
    </alternativeName>
    <alternativeName>
        <fullName>Tumor suppressor in lung cancer 1</fullName>
        <shortName>TSLC-1</shortName>
    </alternativeName>
</protein>
<feature type="signal peptide" evidence="4">
    <location>
        <begin position="1"/>
        <end position="44"/>
    </location>
</feature>
<feature type="chain" id="PRO_0000291968" description="Cell adhesion molecule 1" evidence="4">
    <location>
        <begin position="45"/>
        <end position="442"/>
    </location>
</feature>
<feature type="topological domain" description="Extracellular" evidence="4">
    <location>
        <begin position="45"/>
        <end position="374"/>
    </location>
</feature>
<feature type="transmembrane region" description="Helical" evidence="4">
    <location>
        <begin position="375"/>
        <end position="395"/>
    </location>
</feature>
<feature type="topological domain" description="Cytoplasmic" evidence="4">
    <location>
        <begin position="396"/>
        <end position="442"/>
    </location>
</feature>
<feature type="domain" description="Ig-like V-type" evidence="4">
    <location>
        <begin position="45"/>
        <end position="139"/>
    </location>
</feature>
<feature type="domain" description="Ig-like C2-type 1" evidence="4">
    <location>
        <begin position="144"/>
        <end position="238"/>
    </location>
</feature>
<feature type="domain" description="Ig-like C2-type 2" evidence="4">
    <location>
        <begin position="243"/>
        <end position="329"/>
    </location>
</feature>
<feature type="modified residue" description="Phosphothreonine" evidence="3">
    <location>
        <position position="422"/>
    </location>
</feature>
<feature type="modified residue" description="Phosphoserine" evidence="3">
    <location>
        <position position="434"/>
    </location>
</feature>
<feature type="glycosylation site" description="N-linked (GlcNAc...) asparagine" evidence="4">
    <location>
        <position position="67"/>
    </location>
</feature>
<feature type="glycosylation site" description="N-linked (GlcNAc...) asparagine" evidence="17 18 19">
    <location>
        <position position="101"/>
    </location>
</feature>
<feature type="glycosylation site" description="N-linked (GlcNAc...) asparagine" evidence="17 18 19">
    <location>
        <position position="113"/>
    </location>
</feature>
<feature type="glycosylation site" description="N-linked (GlcNAc...) asparagine" evidence="4">
    <location>
        <position position="165"/>
    </location>
</feature>
<feature type="glycosylation site" description="N-linked (GlcNAc...) asparagine" evidence="4">
    <location>
        <position position="304"/>
    </location>
</feature>
<feature type="glycosylation site" description="N-linked (GlcNAc...) asparagine" evidence="4">
    <location>
        <position position="308"/>
    </location>
</feature>
<feature type="disulfide bond" evidence="5 22 37">
    <location>
        <begin position="64"/>
        <end position="124"/>
    </location>
</feature>
<feature type="disulfide bond" evidence="5">
    <location>
        <begin position="166"/>
        <end position="220"/>
    </location>
</feature>
<feature type="disulfide bond" evidence="5">
    <location>
        <begin position="267"/>
        <end position="313"/>
    </location>
</feature>
<feature type="splice variant" id="VSP_052461" description="In isoform 2." evidence="31">
    <original>DP</original>
    <variation>GT</variation>
    <location>
        <begin position="332"/>
        <end position="333"/>
    </location>
</feature>
<feature type="splice variant" id="VSP_047405" description="In isoform 5." evidence="27 30">
    <location>
        <begin position="333"/>
        <end position="360"/>
    </location>
</feature>
<feature type="splice variant" id="VSP_052462" description="In isoform 2." evidence="31">
    <location>
        <begin position="334"/>
        <end position="442"/>
    </location>
</feature>
<feature type="splice variant" id="VSP_047406" description="In isoform 3." evidence="29">
    <original>T</original>
    <variation>TDTTATTEPAVHGLTQLPNSAEELDSEDLS</variation>
    <location>
        <position position="359"/>
    </location>
</feature>
<feature type="splice variant" id="VSP_047407" description="In isoform 4." evidence="29">
    <original>T</original>
    <variation>TDTTATTEPAVH</variation>
    <location>
        <position position="359"/>
    </location>
</feature>
<feature type="sequence variant" id="VAR_061309" description="In dbSNP:rs45525440.">
    <original>D</original>
    <variation>E</variation>
    <location>
        <position position="285"/>
    </location>
</feature>
<feature type="mutagenesis site" description="Nearly abolishes EPB41L3 binding." evidence="20">
    <original>Y</original>
    <variation>A</variation>
    <location>
        <position position="406"/>
    </location>
</feature>
<feature type="mutagenesis site" description="Strongly reduced affinity for EPB41L3." evidence="20">
    <original>T</original>
    <variation>A</variation>
    <location>
        <position position="408"/>
    </location>
</feature>
<feature type="sequence conflict" description="In Ref. 2; CCD32613." evidence="32" ref="2">
    <original>A</original>
    <variation>V</variation>
    <location>
        <position position="13"/>
    </location>
</feature>
<feature type="sequence conflict" description="In Ref. 1; AAF69029." evidence="32" ref="1">
    <original>K</original>
    <variation>R</variation>
    <location>
        <position position="153"/>
    </location>
</feature>
<feature type="sequence conflict" description="In Ref. 5; BAC11657." evidence="32" ref="5">
    <original>PPTTIPPPTTTTTTTTTTTTTILTIIT</original>
    <variation>TTATTEPAVHGLTQLPNSAEELDSEDLS</variation>
    <location>
        <begin position="333"/>
        <end position="359"/>
    </location>
</feature>
<feature type="strand" evidence="39">
    <location>
        <begin position="52"/>
        <end position="55"/>
    </location>
</feature>
<feature type="strand" evidence="39">
    <location>
        <begin position="60"/>
        <end position="68"/>
    </location>
</feature>
<feature type="strand" evidence="39">
    <location>
        <begin position="74"/>
        <end position="77"/>
    </location>
</feature>
<feature type="strand" evidence="39">
    <location>
        <begin position="83"/>
        <end position="86"/>
    </location>
</feature>
<feature type="strand" evidence="39">
    <location>
        <begin position="97"/>
        <end position="103"/>
    </location>
</feature>
<feature type="strand" evidence="39">
    <location>
        <begin position="106"/>
        <end position="113"/>
    </location>
</feature>
<feature type="helix" evidence="39">
    <location>
        <begin position="116"/>
        <end position="118"/>
    </location>
</feature>
<feature type="strand" evidence="39">
    <location>
        <begin position="120"/>
        <end position="126"/>
    </location>
</feature>
<feature type="strand" evidence="39">
    <location>
        <begin position="128"/>
        <end position="130"/>
    </location>
</feature>
<feature type="strand" evidence="39">
    <location>
        <begin position="132"/>
        <end position="141"/>
    </location>
</feature>
<feature type="strand" evidence="38">
    <location>
        <begin position="405"/>
        <end position="407"/>
    </location>
</feature>
<evidence type="ECO:0000250" key="1"/>
<evidence type="ECO:0000250" key="2">
    <source>
        <dbReference type="UniProtKB" id="Q6AYP5"/>
    </source>
</evidence>
<evidence type="ECO:0000250" key="3">
    <source>
        <dbReference type="UniProtKB" id="Q8R5M8"/>
    </source>
</evidence>
<evidence type="ECO:0000255" key="4"/>
<evidence type="ECO:0000255" key="5">
    <source>
        <dbReference type="PROSITE-ProRule" id="PRU00114"/>
    </source>
</evidence>
<evidence type="ECO:0000269" key="6">
    <source>
    </source>
</evidence>
<evidence type="ECO:0000269" key="7">
    <source>
    </source>
</evidence>
<evidence type="ECO:0000269" key="8">
    <source>
    </source>
</evidence>
<evidence type="ECO:0000269" key="9">
    <source>
    </source>
</evidence>
<evidence type="ECO:0000269" key="10">
    <source>
    </source>
</evidence>
<evidence type="ECO:0000269" key="11">
    <source>
    </source>
</evidence>
<evidence type="ECO:0000269" key="12">
    <source>
    </source>
</evidence>
<evidence type="ECO:0000269" key="13">
    <source>
    </source>
</evidence>
<evidence type="ECO:0000269" key="14">
    <source>
    </source>
</evidence>
<evidence type="ECO:0000269" key="15">
    <source>
    </source>
</evidence>
<evidence type="ECO:0000269" key="16">
    <source>
    </source>
</evidence>
<evidence type="ECO:0000269" key="17">
    <source>
    </source>
</evidence>
<evidence type="ECO:0000269" key="18">
    <source>
    </source>
</evidence>
<evidence type="ECO:0000269" key="19">
    <source>
    </source>
</evidence>
<evidence type="ECO:0000269" key="20">
    <source>
    </source>
</evidence>
<evidence type="ECO:0000269" key="21">
    <source>
    </source>
</evidence>
<evidence type="ECO:0000269" key="22">
    <source>
    </source>
</evidence>
<evidence type="ECO:0000269" key="23">
    <source>
    </source>
</evidence>
<evidence type="ECO:0000269" key="24">
    <source>
    </source>
</evidence>
<evidence type="ECO:0000269" key="25">
    <source>
    </source>
</evidence>
<evidence type="ECO:0000269" key="26">
    <source ref="4"/>
</evidence>
<evidence type="ECO:0000303" key="27">
    <source>
    </source>
</evidence>
<evidence type="ECO:0000303" key="28">
    <source>
    </source>
</evidence>
<evidence type="ECO:0000303" key="29">
    <source>
    </source>
</evidence>
<evidence type="ECO:0000303" key="30">
    <source>
    </source>
</evidence>
<evidence type="ECO:0000303" key="31">
    <source ref="4"/>
</evidence>
<evidence type="ECO:0000305" key="32"/>
<evidence type="ECO:0000312" key="33">
    <source>
        <dbReference type="EMBL" id="AAF69029.1"/>
    </source>
</evidence>
<evidence type="ECO:0000312" key="34">
    <source>
        <dbReference type="EMBL" id="BAC11657.1"/>
    </source>
</evidence>
<evidence type="ECO:0000312" key="35">
    <source>
        <dbReference type="EMBL" id="BAC66178.1"/>
    </source>
</evidence>
<evidence type="ECO:0000312" key="36">
    <source>
        <dbReference type="HGNC" id="HGNC:5951"/>
    </source>
</evidence>
<evidence type="ECO:0007744" key="37">
    <source>
        <dbReference type="PDB" id="4H5S"/>
    </source>
</evidence>
<evidence type="ECO:0007829" key="38">
    <source>
        <dbReference type="PDB" id="3BIN"/>
    </source>
</evidence>
<evidence type="ECO:0007829" key="39">
    <source>
        <dbReference type="PDB" id="4H5S"/>
    </source>
</evidence>
<name>CADM1_HUMAN</name>
<comment type="function">
    <text evidence="3 6 7 8 9 14 16 21">Mediates homophilic cell-cell adhesion in a Ca(2+)-independent manner (PubMed:12050160, PubMed:22438059). Also mediates heterophilic cell-cell adhesion with CADM3 and NECTIN3 in a Ca(2+)-independent manner (By similarity). Interaction with CRTAM promotes natural killer (NK) cell cytotoxicity and interferon-gamma (IFN-gamma) secretion by CD8+ cells in vitro as well as NK cell-mediated rejection of tumors expressing CADM1 in vivo (PubMed:15811952). In mast cells, may mediate attachment to and promote communication with nerves (PubMed:15905536). CADM1, together with MITF, is essential for development and survival of mast cells in vivo (PubMed:22438059). By interacting with CRTAM and thus promoting the adhesion between CD8+ T-cells and CD8+ dendritic cells, regulates the retention of activated CD8+ T-cell within the draining lymph node (By similarity). Required for the intestinal retention of intraepithelial CD4+ CD8+ T-cells and, to a lesser extent, intraepithelial and lamina propria CD8+ T-cells and CD4+ T-cells (By similarity). Interaction with CRTAM promotes the adhesion to gut-associated CD103+ dendritic cells, which may facilitate the expression of gut-homing and adhesion molecules on T-cells and the conversion of CD4+ T-cells into CD4+ CD8+ T-cells (By similarity). Acts as a synaptic cell adhesion molecule and plays a role in the formation of dendritic spines and in synapse assembly (By similarity). May be involved in neuronal migration, axon growth, pathfinding, and fasciculation on the axons of differentiating neurons (By similarity). May play diverse roles in the spermatogenesis including in the adhesion of spermatocytes and spermatids to Sertoli cells and for their normal differentiation into mature spermatozoa (By similarity). Acts as a tumor suppressor in non-small-cell lung cancer (NSCLC) cells (PubMed:11279526, PubMed:12234973). May contribute to the less invasive phenotypes of lepidic growth tumor cells (PubMed:12920246).</text>
</comment>
<comment type="function">
    <molecule>Isoform 5</molecule>
    <text evidence="25">(Microbial infection) Induces cell fusion in neuron infected by a neuropathogenic strain of measles. Interacts with measles hemagglutinin to trigger hyperfusogenic F-mediated membrane fusion and presumably transsynaptic cell-to-cell transmission of the virus.</text>
</comment>
<comment type="subunit">
    <text evidence="2 3 7 8 10 13 14 20 22 23">Homodimer (via Ig-like V-type domain) (PubMed:12050160, PubMed:23871486). Interacts with FARP1 (By similarity). Interacts (via Ig-like V-type domain) with CRTAM (via Ig-like V-type domain); the interaction competes with CRTAM homodimerization and CADM1 homodimerization (PubMed:15781451, PubMed:15811952, PubMed:23871486). Interacts (via C-terminus) with EPB41L3/DAL1 (PubMed:12234973, PubMed:21131357). The interaction with EPB41L3/DAL1 may act to anchor CADM1 to the actin cytoskeleton (PubMed:12234973). Interacts (via C-terminus) with MPP2 (via PDZ domain) (By similarity). Interacts (via C-terminus) with MPP3 (via PDZ domain); this interaction connects CADM1 with DLG1 (PubMed:13679854, PubMed:24503895). Interacts (via C-terminus) with PALS2 (via PDZ domain) (By similarity).</text>
</comment>
<comment type="subunit">
    <text evidence="24">(Microbial infection) Interacts with herpes virus 8 proteins vFLIP and vGPCR; these interactions are essential for NF-kappa-B activation.</text>
</comment>
<comment type="interaction">
    <interactant intactId="EBI-5652260">
        <id>Q9BY67</id>
    </interactant>
    <interactant intactId="EBI-16044697">
        <id>O95727-1</id>
        <label>CRTAM</label>
    </interactant>
    <organismsDiffer>false</organismsDiffer>
    <experiments>4</experiments>
</comment>
<comment type="interaction">
    <interactant intactId="EBI-5652260">
        <id>Q9BY67</id>
    </interactant>
    <interactant intactId="EBI-357793">
        <id>P60900</id>
        <label>PSMA6</label>
    </interactant>
    <organismsDiffer>false</organismsDiffer>
    <experiments>3</experiments>
</comment>
<comment type="interaction">
    <interactant intactId="EBI-5652260">
        <id>Q9BY67</id>
    </interactant>
    <interactant intactId="EBI-15854779">
        <id>O35696</id>
        <label>St8sia2</label>
    </interactant>
    <organismsDiffer>true</organismsDiffer>
    <experiments>2</experiments>
</comment>
<comment type="interaction">
    <interactant intactId="EBI-5652260">
        <id>Q9BY67</id>
    </interactant>
    <interactant intactId="EBI-15854853">
        <id>Q64690</id>
        <label>ST8SIA4</label>
    </interactant>
    <organismsDiffer>true</organismsDiffer>
    <experiments>2</experiments>
</comment>
<comment type="subcellular location">
    <subcellularLocation>
        <location evidence="6 21">Cell membrane</location>
        <topology evidence="6">Single-pass type I membrane protein</topology>
    </subcellularLocation>
    <subcellularLocation>
        <location evidence="3">Synapse</location>
    </subcellularLocation>
    <text evidence="3">Localized to the basolateral plasma membrane of epithelial cells in gall bladder.</text>
</comment>
<comment type="alternative products">
    <event type="alternative splicing"/>
    <isoform>
        <id>Q9BY67-1</id>
        <name evidence="15">1</name>
        <sequence type="displayed"/>
    </isoform>
    <isoform>
        <id>Q9BY67-2</id>
        <name evidence="26">2</name>
        <sequence type="described" ref="VSP_052461 VSP_052462"/>
    </isoform>
    <isoform>
        <id>Q9BY67-3</id>
        <name>3</name>
        <sequence type="described" ref="VSP_047406"/>
    </isoform>
    <isoform>
        <id>Q9BY67-4</id>
        <name>4</name>
        <sequence type="described" ref="VSP_047407"/>
    </isoform>
    <isoform>
        <id>Q9BY67-5</id>
        <name>5</name>
        <name>E</name>
        <sequence type="described" ref="VSP_047405"/>
    </isoform>
</comment>
<comment type="domain">
    <text evidence="11 12">The cytoplasmic domain appears to play a critical role in proapoptosis and tumor suppressor activity in NSCLC.</text>
</comment>
<comment type="PTM">
    <text evidence="1">Glycosylation at Asn-67 and Asn-101 promotes adhesive binding and synapse induction.</text>
</comment>
<comment type="similarity">
    <text evidence="32">Belongs to the nectin family.</text>
</comment>
<comment type="sequence caution" evidence="32">
    <conflict type="frameshift">
        <sequence resource="EMBL-CDS" id="AAI25103"/>
    </conflict>
</comment>
<dbReference type="EMBL" id="AF132811">
    <property type="protein sequence ID" value="AAF69029.1"/>
    <property type="molecule type" value="mRNA"/>
</dbReference>
<dbReference type="EMBL" id="HE586496">
    <property type="protein sequence ID" value="CCD32610.1"/>
    <property type="molecule type" value="mRNA"/>
</dbReference>
<dbReference type="EMBL" id="HE586497">
    <property type="protein sequence ID" value="CCD32611.1"/>
    <property type="molecule type" value="mRNA"/>
</dbReference>
<dbReference type="EMBL" id="HE586498">
    <property type="protein sequence ID" value="CCD32612.1"/>
    <property type="molecule type" value="mRNA"/>
</dbReference>
<dbReference type="EMBL" id="HE586499">
    <property type="protein sequence ID" value="CCD32613.1"/>
    <property type="molecule type" value="mRNA"/>
</dbReference>
<dbReference type="EMBL" id="KJ534791">
    <property type="protein sequence ID" value="AHW56431.1"/>
    <property type="molecule type" value="mRNA"/>
</dbReference>
<dbReference type="EMBL" id="KJ534794">
    <property type="protein sequence ID" value="AHW56434.1"/>
    <property type="molecule type" value="mRNA"/>
</dbReference>
<dbReference type="EMBL" id="AB094146">
    <property type="protein sequence ID" value="BAC66178.1"/>
    <property type="molecule type" value="mRNA"/>
</dbReference>
<dbReference type="EMBL" id="AK075502">
    <property type="protein sequence ID" value="BAC11657.1"/>
    <property type="molecule type" value="mRNA"/>
</dbReference>
<dbReference type="EMBL" id="AP000462">
    <property type="status" value="NOT_ANNOTATED_CDS"/>
    <property type="molecule type" value="Genomic_DNA"/>
</dbReference>
<dbReference type="EMBL" id="AP000465">
    <property type="status" value="NOT_ANNOTATED_CDS"/>
    <property type="molecule type" value="Genomic_DNA"/>
</dbReference>
<dbReference type="EMBL" id="AP003174">
    <property type="status" value="NOT_ANNOTATED_CDS"/>
    <property type="molecule type" value="Genomic_DNA"/>
</dbReference>
<dbReference type="EMBL" id="AP003179">
    <property type="status" value="NOT_ANNOTATED_CDS"/>
    <property type="molecule type" value="Genomic_DNA"/>
</dbReference>
<dbReference type="EMBL" id="AP005020">
    <property type="status" value="NOT_ANNOTATED_CDS"/>
    <property type="molecule type" value="Genomic_DNA"/>
</dbReference>
<dbReference type="EMBL" id="BC125102">
    <property type="protein sequence ID" value="AAI25103.1"/>
    <property type="status" value="ALT_FRAME"/>
    <property type="molecule type" value="mRNA"/>
</dbReference>
<dbReference type="CCDS" id="CCDS53711.1">
    <molecule id="Q9BY67-5"/>
</dbReference>
<dbReference type="CCDS" id="CCDS73398.1">
    <molecule id="Q9BY67-4"/>
</dbReference>
<dbReference type="CCDS" id="CCDS73399.1">
    <molecule id="Q9BY67-3"/>
</dbReference>
<dbReference type="CCDS" id="CCDS8373.1">
    <molecule id="Q9BY67-1"/>
</dbReference>
<dbReference type="RefSeq" id="NP_001091987.1">
    <molecule id="Q9BY67-5"/>
    <property type="nucleotide sequence ID" value="NM_001098517.2"/>
</dbReference>
<dbReference type="RefSeq" id="NP_001287972.1">
    <molecule id="Q9BY67-3"/>
    <property type="nucleotide sequence ID" value="NM_001301043.2"/>
</dbReference>
<dbReference type="RefSeq" id="NP_001287973.1">
    <molecule id="Q9BY67-4"/>
    <property type="nucleotide sequence ID" value="NM_001301044.2"/>
</dbReference>
<dbReference type="RefSeq" id="NP_001287974.1">
    <property type="nucleotide sequence ID" value="NM_001301045.1"/>
</dbReference>
<dbReference type="RefSeq" id="NP_055148.3">
    <molecule id="Q9BY67-1"/>
    <property type="nucleotide sequence ID" value="NM_014333.3"/>
</dbReference>
<dbReference type="PDB" id="3BIN">
    <property type="method" value="X-ray"/>
    <property type="resolution" value="2.30 A"/>
    <property type="chains" value="B=400-411"/>
</dbReference>
<dbReference type="PDB" id="4H5S">
    <property type="method" value="X-ray"/>
    <property type="resolution" value="1.70 A"/>
    <property type="chains" value="B=45-144"/>
</dbReference>
<dbReference type="PDBsum" id="3BIN"/>
<dbReference type="PDBsum" id="4H5S"/>
<dbReference type="SMR" id="Q9BY67"/>
<dbReference type="BioGRID" id="117218">
    <property type="interactions" value="39"/>
</dbReference>
<dbReference type="CORUM" id="Q9BY67"/>
<dbReference type="DIP" id="DIP-57599N"/>
<dbReference type="FunCoup" id="Q9BY67">
    <property type="interactions" value="746"/>
</dbReference>
<dbReference type="IntAct" id="Q9BY67">
    <property type="interactions" value="22"/>
</dbReference>
<dbReference type="MINT" id="Q9BY67"/>
<dbReference type="STRING" id="9606.ENSP00000329797"/>
<dbReference type="GlyConnect" id="1101">
    <property type="glycosylation" value="11 N-Linked glycans (3 sites)"/>
</dbReference>
<dbReference type="GlyCosmos" id="Q9BY67">
    <property type="glycosylation" value="6 sites, 11 glycans"/>
</dbReference>
<dbReference type="GlyGen" id="Q9BY67">
    <property type="glycosylation" value="13 sites, 47 N-linked glycans (6 sites), 1 O-linked glycan (1 site)"/>
</dbReference>
<dbReference type="iPTMnet" id="Q9BY67"/>
<dbReference type="PhosphoSitePlus" id="Q9BY67"/>
<dbReference type="BioMuta" id="CADM1"/>
<dbReference type="DMDM" id="150438862"/>
<dbReference type="CPTAC" id="CPTAC-1282"/>
<dbReference type="CPTAC" id="CPTAC-1283"/>
<dbReference type="CPTAC" id="CPTAC-2210"/>
<dbReference type="jPOST" id="Q9BY67"/>
<dbReference type="MassIVE" id="Q9BY67"/>
<dbReference type="PaxDb" id="9606-ENSP00000329797"/>
<dbReference type="PeptideAtlas" id="Q9BY67"/>
<dbReference type="ProteomicsDB" id="25359"/>
<dbReference type="ProteomicsDB" id="38329"/>
<dbReference type="ProteomicsDB" id="79594">
    <molecule id="Q9BY67-1"/>
</dbReference>
<dbReference type="ProteomicsDB" id="79595">
    <molecule id="Q9BY67-2"/>
</dbReference>
<dbReference type="Pumba" id="Q9BY67"/>
<dbReference type="ABCD" id="Q9BY67">
    <property type="antibodies" value="13 sequenced antibodies"/>
</dbReference>
<dbReference type="Antibodypedia" id="32257">
    <property type="antibodies" value="635 antibodies from 40 providers"/>
</dbReference>
<dbReference type="CPTC" id="Q9BY67">
    <property type="antibodies" value="2 antibodies"/>
</dbReference>
<dbReference type="DNASU" id="23705"/>
<dbReference type="Ensembl" id="ENST00000331581.11">
    <molecule id="Q9BY67-3"/>
    <property type="protein sequence ID" value="ENSP00000329797.6"/>
    <property type="gene ID" value="ENSG00000182985.19"/>
</dbReference>
<dbReference type="Ensembl" id="ENST00000452722.7">
    <molecule id="Q9BY67-1"/>
    <property type="protein sequence ID" value="ENSP00000395359.2"/>
    <property type="gene ID" value="ENSG00000182985.19"/>
</dbReference>
<dbReference type="Ensembl" id="ENST00000537058.5">
    <molecule id="Q9BY67-4"/>
    <property type="protein sequence ID" value="ENSP00000439817.1"/>
    <property type="gene ID" value="ENSG00000182985.19"/>
</dbReference>
<dbReference type="Ensembl" id="ENST00000542447.6">
    <molecule id="Q9BY67-5"/>
    <property type="protein sequence ID" value="ENSP00000439176.1"/>
    <property type="gene ID" value="ENSG00000182985.19"/>
</dbReference>
<dbReference type="GeneID" id="23705"/>
<dbReference type="KEGG" id="hsa:23705"/>
<dbReference type="MANE-Select" id="ENST00000331581.11">
    <molecule id="Q9BY67-3"/>
    <property type="protein sequence ID" value="ENSP00000329797.6"/>
    <property type="RefSeq nucleotide sequence ID" value="NM_001301043.2"/>
    <property type="RefSeq protein sequence ID" value="NP_001287972.1"/>
</dbReference>
<dbReference type="UCSC" id="uc001ppk.4">
    <molecule id="Q9BY67-1"/>
    <property type="organism name" value="human"/>
</dbReference>
<dbReference type="AGR" id="HGNC:5951"/>
<dbReference type="CTD" id="23705"/>
<dbReference type="DisGeNET" id="23705"/>
<dbReference type="GeneCards" id="CADM1"/>
<dbReference type="HGNC" id="HGNC:5951">
    <property type="gene designation" value="CADM1"/>
</dbReference>
<dbReference type="HPA" id="ENSG00000182985">
    <property type="expression patterns" value="Tissue enhanced (retina)"/>
</dbReference>
<dbReference type="MalaCards" id="CADM1"/>
<dbReference type="MIM" id="605686">
    <property type="type" value="gene"/>
</dbReference>
<dbReference type="neXtProt" id="NX_Q9BY67"/>
<dbReference type="OpenTargets" id="ENSG00000182985"/>
<dbReference type="PharmGKB" id="PA29764"/>
<dbReference type="VEuPathDB" id="HostDB:ENSG00000182985"/>
<dbReference type="eggNOG" id="ENOG502R1KU">
    <property type="taxonomic scope" value="Eukaryota"/>
</dbReference>
<dbReference type="GeneTree" id="ENSGT00940000156093"/>
<dbReference type="InParanoid" id="Q9BY67"/>
<dbReference type="OMA" id="TYDRMYT"/>
<dbReference type="OrthoDB" id="5843397at2759"/>
<dbReference type="PAN-GO" id="Q9BY67">
    <property type="GO annotations" value="8 GO annotations based on evolutionary models"/>
</dbReference>
<dbReference type="PhylomeDB" id="Q9BY67"/>
<dbReference type="TreeFam" id="TF334317"/>
<dbReference type="PathwayCommons" id="Q9BY67"/>
<dbReference type="Reactome" id="R-HSA-418990">
    <property type="pathway name" value="Adherens junctions interactions"/>
</dbReference>
<dbReference type="Reactome" id="R-HSA-420597">
    <property type="pathway name" value="Nectin/Necl trans heterodimerization"/>
</dbReference>
<dbReference type="SignaLink" id="Q9BY67"/>
<dbReference type="SIGNOR" id="Q9BY67"/>
<dbReference type="BioGRID-ORCS" id="23705">
    <property type="hits" value="9 hits in 1150 CRISPR screens"/>
</dbReference>
<dbReference type="ChiTaRS" id="CADM1">
    <property type="organism name" value="human"/>
</dbReference>
<dbReference type="EvolutionaryTrace" id="Q9BY67"/>
<dbReference type="GeneWiki" id="Cell_adhesion_molecule_1"/>
<dbReference type="GenomeRNAi" id="23705"/>
<dbReference type="Pharos" id="Q9BY67">
    <property type="development level" value="Tbio"/>
</dbReference>
<dbReference type="PRO" id="PR:Q9BY67"/>
<dbReference type="Proteomes" id="UP000005640">
    <property type="component" value="Chromosome 11"/>
</dbReference>
<dbReference type="RNAct" id="Q9BY67">
    <property type="molecule type" value="protein"/>
</dbReference>
<dbReference type="Bgee" id="ENSG00000182985">
    <property type="expression patterns" value="Expressed in paraflocculus and 218 other cell types or tissues"/>
</dbReference>
<dbReference type="ExpressionAtlas" id="Q9BY67">
    <property type="expression patterns" value="baseline and differential"/>
</dbReference>
<dbReference type="GO" id="GO:0016323">
    <property type="term" value="C:basolateral plasma membrane"/>
    <property type="evidence" value="ECO:0000250"/>
    <property type="project" value="UniProtKB"/>
</dbReference>
<dbReference type="GO" id="GO:0005911">
    <property type="term" value="C:cell-cell junction"/>
    <property type="evidence" value="ECO:0000250"/>
    <property type="project" value="UniProtKB"/>
</dbReference>
<dbReference type="GO" id="GO:0043005">
    <property type="term" value="C:neuron projection"/>
    <property type="evidence" value="ECO:0000318"/>
    <property type="project" value="GO_Central"/>
</dbReference>
<dbReference type="GO" id="GO:0005886">
    <property type="term" value="C:plasma membrane"/>
    <property type="evidence" value="ECO:0000314"/>
    <property type="project" value="UniProtKB"/>
</dbReference>
<dbReference type="GO" id="GO:0045202">
    <property type="term" value="C:synapse"/>
    <property type="evidence" value="ECO:0000318"/>
    <property type="project" value="GO_Central"/>
</dbReference>
<dbReference type="GO" id="GO:0030165">
    <property type="term" value="F:PDZ domain binding"/>
    <property type="evidence" value="ECO:0000250"/>
    <property type="project" value="UniProtKB"/>
</dbReference>
<dbReference type="GO" id="GO:0042803">
    <property type="term" value="F:protein homodimerization activity"/>
    <property type="evidence" value="ECO:0000250"/>
    <property type="project" value="UniProtKB"/>
</dbReference>
<dbReference type="GO" id="GO:0005102">
    <property type="term" value="F:signaling receptor binding"/>
    <property type="evidence" value="ECO:0000353"/>
    <property type="project" value="UniProtKB"/>
</dbReference>
<dbReference type="GO" id="GO:0006915">
    <property type="term" value="P:apoptotic process"/>
    <property type="evidence" value="ECO:0007669"/>
    <property type="project" value="UniProtKB-KW"/>
</dbReference>
<dbReference type="GO" id="GO:0030154">
    <property type="term" value="P:cell differentiation"/>
    <property type="evidence" value="ECO:0007669"/>
    <property type="project" value="UniProtKB-KW"/>
</dbReference>
<dbReference type="GO" id="GO:0008037">
    <property type="term" value="P:cell recognition"/>
    <property type="evidence" value="ECO:0000314"/>
    <property type="project" value="UniProtKB"/>
</dbReference>
<dbReference type="GO" id="GO:0051606">
    <property type="term" value="P:detection of stimulus"/>
    <property type="evidence" value="ECO:0000314"/>
    <property type="project" value="UniProtKB"/>
</dbReference>
<dbReference type="GO" id="GO:0007157">
    <property type="term" value="P:heterophilic cell-cell adhesion via plasma membrane cell adhesion molecules"/>
    <property type="evidence" value="ECO:0000250"/>
    <property type="project" value="UniProtKB"/>
</dbReference>
<dbReference type="GO" id="GO:0007156">
    <property type="term" value="P:homophilic cell adhesion via plasma membrane adhesion molecules"/>
    <property type="evidence" value="ECO:0000250"/>
    <property type="project" value="UniProtKB"/>
</dbReference>
<dbReference type="GO" id="GO:0002376">
    <property type="term" value="P:immune system process"/>
    <property type="evidence" value="ECO:0007669"/>
    <property type="project" value="UniProtKB-KW"/>
</dbReference>
<dbReference type="GO" id="GO:0001819">
    <property type="term" value="P:positive regulation of cytokine production"/>
    <property type="evidence" value="ECO:0000314"/>
    <property type="project" value="UniProtKB"/>
</dbReference>
<dbReference type="GO" id="GO:0045954">
    <property type="term" value="P:positive regulation of natural killer cell mediated cytotoxicity"/>
    <property type="evidence" value="ECO:0000314"/>
    <property type="project" value="UniProtKB"/>
</dbReference>
<dbReference type="GO" id="GO:0007283">
    <property type="term" value="P:spermatogenesis"/>
    <property type="evidence" value="ECO:0007669"/>
    <property type="project" value="UniProtKB-KW"/>
</dbReference>
<dbReference type="GO" id="GO:0042271">
    <property type="term" value="P:susceptibility to natural killer cell mediated cytotoxicity"/>
    <property type="evidence" value="ECO:0000314"/>
    <property type="project" value="UniProtKB"/>
</dbReference>
<dbReference type="CDD" id="cd05883">
    <property type="entry name" value="IgI_2_Necl-2"/>
    <property type="match status" value="1"/>
</dbReference>
<dbReference type="CDD" id="cd05881">
    <property type="entry name" value="IgV_1_Necl-2"/>
    <property type="match status" value="1"/>
</dbReference>
<dbReference type="FunFam" id="2.60.40.10:FF:000013">
    <property type="entry name" value="cell adhesion molecule 1 isoform X1"/>
    <property type="match status" value="1"/>
</dbReference>
<dbReference type="FunFam" id="2.60.40.10:FF:000200">
    <property type="entry name" value="cell adhesion molecule 1 isoform X1"/>
    <property type="match status" value="1"/>
</dbReference>
<dbReference type="FunFam" id="2.60.40.10:FF:000184">
    <property type="entry name" value="cell adhesion molecule 1 isoform X2"/>
    <property type="match status" value="1"/>
</dbReference>
<dbReference type="Gene3D" id="2.60.40.10">
    <property type="entry name" value="Immunoglobulins"/>
    <property type="match status" value="3"/>
</dbReference>
<dbReference type="InterPro" id="IPR013162">
    <property type="entry name" value="CD80_C2-set"/>
</dbReference>
<dbReference type="InterPro" id="IPR007110">
    <property type="entry name" value="Ig-like_dom"/>
</dbReference>
<dbReference type="InterPro" id="IPR036179">
    <property type="entry name" value="Ig-like_dom_sf"/>
</dbReference>
<dbReference type="InterPro" id="IPR013783">
    <property type="entry name" value="Ig-like_fold"/>
</dbReference>
<dbReference type="InterPro" id="IPR003599">
    <property type="entry name" value="Ig_sub"/>
</dbReference>
<dbReference type="InterPro" id="IPR003598">
    <property type="entry name" value="Ig_sub2"/>
</dbReference>
<dbReference type="InterPro" id="IPR013106">
    <property type="entry name" value="Ig_V-set"/>
</dbReference>
<dbReference type="InterPro" id="IPR003585">
    <property type="entry name" value="Neurexin-like"/>
</dbReference>
<dbReference type="PANTHER" id="PTHR45889:SF2">
    <property type="entry name" value="CELL ADHESION MOLECULE 1"/>
    <property type="match status" value="1"/>
</dbReference>
<dbReference type="PANTHER" id="PTHR45889">
    <property type="entry name" value="IG-LIKE DOMAIN-CONTAINING PROTEIN"/>
    <property type="match status" value="1"/>
</dbReference>
<dbReference type="Pfam" id="PF08205">
    <property type="entry name" value="C2-set_2"/>
    <property type="match status" value="1"/>
</dbReference>
<dbReference type="Pfam" id="PF13927">
    <property type="entry name" value="Ig_3"/>
    <property type="match status" value="1"/>
</dbReference>
<dbReference type="Pfam" id="PF07686">
    <property type="entry name" value="V-set"/>
    <property type="match status" value="1"/>
</dbReference>
<dbReference type="SMART" id="SM00294">
    <property type="entry name" value="4.1m"/>
    <property type="match status" value="1"/>
</dbReference>
<dbReference type="SMART" id="SM00409">
    <property type="entry name" value="IG"/>
    <property type="match status" value="3"/>
</dbReference>
<dbReference type="SMART" id="SM00408">
    <property type="entry name" value="IGc2"/>
    <property type="match status" value="3"/>
</dbReference>
<dbReference type="SUPFAM" id="SSF48726">
    <property type="entry name" value="Immunoglobulin"/>
    <property type="match status" value="3"/>
</dbReference>
<dbReference type="PROSITE" id="PS50835">
    <property type="entry name" value="IG_LIKE"/>
    <property type="match status" value="3"/>
</dbReference>
<accession>Q9BY67</accession>
<accession>A4FVB5</accession>
<accession>F5H0J4</accession>
<accession>H0YGA7</accession>
<accession>H1ZZV9</accession>
<accession>H1ZZW1</accession>
<accession>H1ZZW2</accession>
<accession>Q86WB8</accession>
<accession>Q8N2F4</accession>
<accession>X5D2C8</accession>
<sequence>MASVVLPSGSQCAAAAAAAAPPGLRLRLLLLLFSAAALIPTGDGQNLFTKDVTVIEGEVATISCQVNKSDDSVIQLLNPNRQTIYFRDFRPLKDSRFQLLNFSSSELKVSLTNVSISDEGRYFCQLYTDPPQESYTTITVLVPPRNLMIDIQKDTAVEGEEIEVNCTAMASKPATTIRWFKGNTELKGKSEVEEWSDMYTVTSQLMLKVHKEDDGVPVICQVEHPAVTGNLQTQRYLEVQYKPQVHIQMTYPLQGLTREGDALELTCEAIGKPQPVMVTWVRVDDEMPQHAVLSGPNLFINNLNKTDNGTYRCEASNIVGKAHSDYMLYVYDPPTTIPPPTTTTTTTTTTTTTILTIITDSRAGEEGSIRAVDHAVIGGVVAVVVFAMLCLLIILGRYFARHKGTYFTHEAKGADDAADADTAIINAEGGQNNSEEKKEYFI</sequence>
<gene>
    <name evidence="36" type="primary">CADM1</name>
    <name evidence="3" type="synonym">IGSF4</name>
    <name type="synonym">IGSF4A</name>
    <name evidence="28" type="synonym">NECL2</name>
    <name evidence="3" type="synonym">SYNCAM</name>
    <name evidence="28" type="synonym">TSLC1</name>
</gene>
<reference evidence="32 33" key="1">
    <citation type="journal article" date="2005" name="Biochim. Biophys. Acta">
        <title>Nectin-like molecule 1 is a protein 4.1N associated protein and recruits protein 4.1N from cytoplasm to the plasma membrane.</title>
        <authorList>
            <person name="Zhou Y."/>
            <person name="Du G."/>
            <person name="Hu X."/>
            <person name="Yu S."/>
            <person name="Liu Y."/>
            <person name="Xu Y."/>
            <person name="Huang X."/>
            <person name="Liu J."/>
            <person name="Yin B."/>
            <person name="Fan M."/>
            <person name="Peng X."/>
            <person name="Qiang B."/>
            <person name="Yuan J."/>
        </authorList>
    </citation>
    <scope>NUCLEOTIDE SEQUENCE [MRNA] (ISOFORM 1)</scope>
</reference>
<reference key="2">
    <citation type="journal article" date="2012" name="Cell. Mol. Life Sci.">
        <title>CADM1 isoforms differentially regulate human mast cell survival and homotypic adhesion.</title>
        <authorList>
            <person name="Moiseeva E.P."/>
            <person name="Leyland M.L."/>
            <person name="Bradding P."/>
        </authorList>
    </citation>
    <scope>NUCLEOTIDE SEQUENCE [MRNA] (ISOFORMS 1; 3 AND 4)</scope>
    <scope>FUNCTION</scope>
    <scope>SUBCELLULAR LOCATION</scope>
    <scope>ALTERNATIVE SPLICING</scope>
    <source>
        <tissue>Mast cell</tissue>
    </source>
</reference>
<reference key="3">
    <citation type="journal article" date="2014" name="Nat. Commun.">
        <title>Protein interaction network of alternatively spliced isoforms from brain links genetic risk factors for autism.</title>
        <authorList>
            <person name="Corominas R."/>
            <person name="Yang X."/>
            <person name="Lin G.N."/>
            <person name="Kang S."/>
            <person name="Shen Y."/>
            <person name="Ghamsari L."/>
            <person name="Broly M."/>
            <person name="Rodriguez M."/>
            <person name="Tam S."/>
            <person name="Wanamaker S.A."/>
            <person name="Fan C."/>
            <person name="Yi S."/>
            <person name="Tasan M."/>
            <person name="Lemmens I."/>
            <person name="Kuang X."/>
            <person name="Zhao N."/>
            <person name="Malhotra D."/>
            <person name="Michaelson J.J."/>
            <person name="Vacic V."/>
            <person name="Calderwood M.A."/>
            <person name="Roth F.P."/>
            <person name="Tavernier J."/>
            <person name="Horvath S."/>
            <person name="Salehi-Ashtiani K."/>
            <person name="Korkin D."/>
            <person name="Sebat J."/>
            <person name="Hill D.E."/>
            <person name="Hao T."/>
            <person name="Vidal M."/>
            <person name="Iakoucheva L.M."/>
        </authorList>
    </citation>
    <scope>NUCLEOTIDE SEQUENCE [MRNA] (ISOFORM 5)</scope>
    <source>
        <tissue>Fetal brain</tissue>
    </source>
</reference>
<reference evidence="32 35" key="4">
    <citation type="submission" date="2002-10" db="EMBL/GenBank/DDBJ databases">
        <title>Cloning of a secretory isoform of SgIGSF/TSLC-1.</title>
        <authorList>
            <person name="Ito A."/>
            <person name="Koma Y."/>
            <person name="Nagano T."/>
        </authorList>
    </citation>
    <scope>NUCLEOTIDE SEQUENCE [MRNA] (ISOFORM 2)</scope>
    <source>
        <tissue evidence="35">Lung</tissue>
    </source>
</reference>
<reference evidence="32 34" key="5">
    <citation type="journal article" date="2004" name="Nat. Genet.">
        <title>Complete sequencing and characterization of 21,243 full-length human cDNAs.</title>
        <authorList>
            <person name="Ota T."/>
            <person name="Suzuki Y."/>
            <person name="Nishikawa T."/>
            <person name="Otsuki T."/>
            <person name="Sugiyama T."/>
            <person name="Irie R."/>
            <person name="Wakamatsu A."/>
            <person name="Hayashi K."/>
            <person name="Sato H."/>
            <person name="Nagai K."/>
            <person name="Kimura K."/>
            <person name="Makita H."/>
            <person name="Sekine M."/>
            <person name="Obayashi M."/>
            <person name="Nishi T."/>
            <person name="Shibahara T."/>
            <person name="Tanaka T."/>
            <person name="Ishii S."/>
            <person name="Yamamoto J."/>
            <person name="Saito K."/>
            <person name="Kawai Y."/>
            <person name="Isono Y."/>
            <person name="Nakamura Y."/>
            <person name="Nagahari K."/>
            <person name="Murakami K."/>
            <person name="Yasuda T."/>
            <person name="Iwayanagi T."/>
            <person name="Wagatsuma M."/>
            <person name="Shiratori A."/>
            <person name="Sudo H."/>
            <person name="Hosoiri T."/>
            <person name="Kaku Y."/>
            <person name="Kodaira H."/>
            <person name="Kondo H."/>
            <person name="Sugawara M."/>
            <person name="Takahashi M."/>
            <person name="Kanda K."/>
            <person name="Yokoi T."/>
            <person name="Furuya T."/>
            <person name="Kikkawa E."/>
            <person name="Omura Y."/>
            <person name="Abe K."/>
            <person name="Kamihara K."/>
            <person name="Katsuta N."/>
            <person name="Sato K."/>
            <person name="Tanikawa M."/>
            <person name="Yamazaki M."/>
            <person name="Ninomiya K."/>
            <person name="Ishibashi T."/>
            <person name="Yamashita H."/>
            <person name="Murakawa K."/>
            <person name="Fujimori K."/>
            <person name="Tanai H."/>
            <person name="Kimata M."/>
            <person name="Watanabe M."/>
            <person name="Hiraoka S."/>
            <person name="Chiba Y."/>
            <person name="Ishida S."/>
            <person name="Ono Y."/>
            <person name="Takiguchi S."/>
            <person name="Watanabe S."/>
            <person name="Yosida M."/>
            <person name="Hotuta T."/>
            <person name="Kusano J."/>
            <person name="Kanehori K."/>
            <person name="Takahashi-Fujii A."/>
            <person name="Hara H."/>
            <person name="Tanase T.-O."/>
            <person name="Nomura Y."/>
            <person name="Togiya S."/>
            <person name="Komai F."/>
            <person name="Hara R."/>
            <person name="Takeuchi K."/>
            <person name="Arita M."/>
            <person name="Imose N."/>
            <person name="Musashino K."/>
            <person name="Yuuki H."/>
            <person name="Oshima A."/>
            <person name="Sasaki N."/>
            <person name="Aotsuka S."/>
            <person name="Yoshikawa Y."/>
            <person name="Matsunawa H."/>
            <person name="Ichihara T."/>
            <person name="Shiohata N."/>
            <person name="Sano S."/>
            <person name="Moriya S."/>
            <person name="Momiyama H."/>
            <person name="Satoh N."/>
            <person name="Takami S."/>
            <person name="Terashima Y."/>
            <person name="Suzuki O."/>
            <person name="Nakagawa S."/>
            <person name="Senoh A."/>
            <person name="Mizoguchi H."/>
            <person name="Goto Y."/>
            <person name="Shimizu F."/>
            <person name="Wakebe H."/>
            <person name="Hishigaki H."/>
            <person name="Watanabe T."/>
            <person name="Sugiyama A."/>
            <person name="Takemoto M."/>
            <person name="Kawakami B."/>
            <person name="Yamazaki M."/>
            <person name="Watanabe K."/>
            <person name="Kumagai A."/>
            <person name="Itakura S."/>
            <person name="Fukuzumi Y."/>
            <person name="Fujimori Y."/>
            <person name="Komiyama M."/>
            <person name="Tashiro H."/>
            <person name="Tanigami A."/>
            <person name="Fujiwara T."/>
            <person name="Ono T."/>
            <person name="Yamada K."/>
            <person name="Fujii Y."/>
            <person name="Ozaki K."/>
            <person name="Hirao M."/>
            <person name="Ohmori Y."/>
            <person name="Kawabata A."/>
            <person name="Hikiji T."/>
            <person name="Kobatake N."/>
            <person name="Inagaki H."/>
            <person name="Ikema Y."/>
            <person name="Okamoto S."/>
            <person name="Okitani R."/>
            <person name="Kawakami T."/>
            <person name="Noguchi S."/>
            <person name="Itoh T."/>
            <person name="Shigeta K."/>
            <person name="Senba T."/>
            <person name="Matsumura K."/>
            <person name="Nakajima Y."/>
            <person name="Mizuno T."/>
            <person name="Morinaga M."/>
            <person name="Sasaki M."/>
            <person name="Togashi T."/>
            <person name="Oyama M."/>
            <person name="Hata H."/>
            <person name="Watanabe M."/>
            <person name="Komatsu T."/>
            <person name="Mizushima-Sugano J."/>
            <person name="Satoh T."/>
            <person name="Shirai Y."/>
            <person name="Takahashi Y."/>
            <person name="Nakagawa K."/>
            <person name="Okumura K."/>
            <person name="Nagase T."/>
            <person name="Nomura N."/>
            <person name="Kikuchi H."/>
            <person name="Masuho Y."/>
            <person name="Yamashita R."/>
            <person name="Nakai K."/>
            <person name="Yada T."/>
            <person name="Nakamura Y."/>
            <person name="Ohara O."/>
            <person name="Isogai T."/>
            <person name="Sugano S."/>
        </authorList>
    </citation>
    <scope>NUCLEOTIDE SEQUENCE [LARGE SCALE MRNA] (ISOFORM 1)</scope>
    <source>
        <tissue evidence="34">Embryo</tissue>
    </source>
</reference>
<reference key="6">
    <citation type="journal article" date="2006" name="Nature">
        <title>Human chromosome 11 DNA sequence and analysis including novel gene identification.</title>
        <authorList>
            <person name="Taylor T.D."/>
            <person name="Noguchi H."/>
            <person name="Totoki Y."/>
            <person name="Toyoda A."/>
            <person name="Kuroki Y."/>
            <person name="Dewar K."/>
            <person name="Lloyd C."/>
            <person name="Itoh T."/>
            <person name="Takeda T."/>
            <person name="Kim D.-W."/>
            <person name="She X."/>
            <person name="Barlow K.F."/>
            <person name="Bloom T."/>
            <person name="Bruford E."/>
            <person name="Chang J.L."/>
            <person name="Cuomo C.A."/>
            <person name="Eichler E."/>
            <person name="FitzGerald M.G."/>
            <person name="Jaffe D.B."/>
            <person name="LaButti K."/>
            <person name="Nicol R."/>
            <person name="Park H.-S."/>
            <person name="Seaman C."/>
            <person name="Sougnez C."/>
            <person name="Yang X."/>
            <person name="Zimmer A.R."/>
            <person name="Zody M.C."/>
            <person name="Birren B.W."/>
            <person name="Nusbaum C."/>
            <person name="Fujiyama A."/>
            <person name="Hattori M."/>
            <person name="Rogers J."/>
            <person name="Lander E.S."/>
            <person name="Sakaki Y."/>
        </authorList>
    </citation>
    <scope>NUCLEOTIDE SEQUENCE [LARGE SCALE GENOMIC DNA]</scope>
</reference>
<reference key="7">
    <citation type="journal article" date="2004" name="Genome Res.">
        <title>The status, quality, and expansion of the NIH full-length cDNA project: the Mammalian Gene Collection (MGC).</title>
        <authorList>
            <consortium name="The MGC Project Team"/>
        </authorList>
    </citation>
    <scope>NUCLEOTIDE SEQUENCE [LARGE SCALE MRNA] (ISOFORM 5)</scope>
</reference>
<reference evidence="32" key="8">
    <citation type="journal article" date="2001" name="Nat. Genet.">
        <title>TSLC1 is a tumor-suppressor gene in human non-small-cell lung cancer.</title>
        <authorList>
            <person name="Kuramochi M."/>
            <person name="Fukuhara H."/>
            <person name="Nobukuni T."/>
            <person name="Kanbe T."/>
            <person name="Maruyama T."/>
            <person name="Ghosh H.P."/>
            <person name="Pletcher M."/>
            <person name="Isomura M."/>
            <person name="Onizuka M."/>
            <person name="Kitamura T."/>
            <person name="Sekiya T."/>
            <person name="Reeves R.H."/>
            <person name="Murakami Y."/>
        </authorList>
    </citation>
    <scope>FUNCTION</scope>
    <scope>SUBCELLULAR LOCATION</scope>
</reference>
<reference evidence="32" key="9">
    <citation type="journal article" date="2002" name="Cancer Res.">
        <title>Direct association of TSLC1 and DAL-1, two distinct tumor suppressor proteins in lung cancer.</title>
        <authorList>
            <person name="Yageta M."/>
            <person name="Kuramochi M."/>
            <person name="Masuda M."/>
            <person name="Fukami T."/>
            <person name="Fukuhara H."/>
            <person name="Maruyama T."/>
            <person name="Shibuya M."/>
            <person name="Murakami Y."/>
        </authorList>
    </citation>
    <scope>FUNCTION</scope>
    <scope>INTERACTION WITH EPB41L3</scope>
</reference>
<reference evidence="32" key="10">
    <citation type="journal article" date="2002" name="J. Biol. Chem.">
        <title>The tumor suppressor protein TSLC1 is involved in cell-cell adhesion.</title>
        <authorList>
            <person name="Masuda M."/>
            <person name="Yageta M."/>
            <person name="Fukuhara H."/>
            <person name="Kuramochi M."/>
            <person name="Maruyama T."/>
            <person name="Nomoto A."/>
            <person name="Murakami Y."/>
        </authorList>
    </citation>
    <scope>FUNCTION</scope>
    <scope>SUBUNIT</scope>
    <scope>GLYCOSYLATION</scope>
</reference>
<reference evidence="32" key="11">
    <citation type="journal article" date="2003" name="Cancer Res.">
        <title>The cytoplasmic domain is critical to the tumor suppressor activity of TSLC1 in non-small cell lung cancer.</title>
        <authorList>
            <person name="Mao X."/>
            <person name="Seidlitz E."/>
            <person name="Ghosh K."/>
            <person name="Murakami Y."/>
            <person name="Ghosh H.P."/>
        </authorList>
    </citation>
    <scope>DOMAIN</scope>
</reference>
<reference evidence="32" key="12">
    <citation type="journal article" date="2003" name="Int. J. Cancer">
        <title>Promoter methylation of the TSLC1 gene in advanced lung tumors and various cancer cell lines.</title>
        <authorList>
            <person name="Fukami T."/>
            <person name="Fukuhara H."/>
            <person name="Kuramochi M."/>
            <person name="Maruyama T."/>
            <person name="Isogai K."/>
            <person name="Sakamoto M."/>
            <person name="Takamoto S."/>
            <person name="Murakami Y."/>
        </authorList>
    </citation>
    <scope>DISEASE</scope>
</reference>
<reference evidence="32" key="13">
    <citation type="journal article" date="2003" name="Lab. Invest.">
        <title>Expression of the TSLC1 adhesion molecule in pulmonary epithelium and its down-regulation in pulmonary adenocarcinoma other than bronchioloalveolar carcinoma.</title>
        <authorList>
            <person name="Ito A."/>
            <person name="Okada M."/>
            <person name="Uchino K."/>
            <person name="Wakayama T."/>
            <person name="Koma Y."/>
            <person name="Iseki S."/>
            <person name="Tsubota N."/>
            <person name="Okita Y."/>
            <person name="Kitamura Y."/>
        </authorList>
    </citation>
    <scope>FUNCTION</scope>
</reference>
<reference evidence="32" key="14">
    <citation type="journal article" date="2003" name="Oncogene">
        <title>Association of a lung tumor suppressor TSLC1 with MPP3, a human homologue of Drosophila tumor suppressor Dlg.</title>
        <authorList>
            <person name="Fukuhara H."/>
            <person name="Masuda M."/>
            <person name="Yageta M."/>
            <person name="Fukami T."/>
            <person name="Kuramochi M."/>
            <person name="Maruyama T."/>
            <person name="Kitamura T."/>
            <person name="Murakami Y."/>
        </authorList>
    </citation>
    <scope>INTERACTION WITH MPP3</scope>
</reference>
<reference evidence="32" key="15">
    <citation type="journal article" date="2004" name="Oncogene">
        <title>Re-expression of TSLC1 in a non-small-cell lung cancer cell line induces apoptosis and inhibits tumor growth.</title>
        <authorList>
            <person name="Mao X."/>
            <person name="Seidlitz E."/>
            <person name="Truant R."/>
            <person name="Hitt M."/>
            <person name="Ghosh H.P."/>
        </authorList>
    </citation>
    <scope>DOMAIN</scope>
</reference>
<reference evidence="32" key="16">
    <citation type="journal article" date="2005" name="Blood">
        <title>The tumor suppressor TSLC1/NECL-2 triggers NK-cell and CD8+ T-cell responses through the cell-surface receptor CRTAM.</title>
        <authorList>
            <person name="Boles K.S."/>
            <person name="Barchet W."/>
            <person name="Diacovo T."/>
            <person name="Cella M."/>
            <person name="Colonna M."/>
        </authorList>
    </citation>
    <scope>FUNCTION</scope>
    <scope>INTERACTION WITH CRTAM</scope>
</reference>
<reference evidence="32" key="17">
    <citation type="journal article" date="2005" name="J. Biol. Chem.">
        <title>Nectin-like protein 2 defines a subset of T-cell zone dendritic cells and is a ligand for class-I-restricted T-cell-associated molecule.</title>
        <authorList>
            <person name="Galibert L."/>
            <person name="Diemer G.S."/>
            <person name="Liu Z."/>
            <person name="Johnson R.S."/>
            <person name="Smith J.L."/>
            <person name="Walzer T."/>
            <person name="Comeau M.R."/>
            <person name="Rauch C.T."/>
            <person name="Wolfson M.F."/>
            <person name="Sorensen R.A."/>
            <person name="Van der Vuurst de Vries A.-R."/>
            <person name="Branstetter D.G."/>
            <person name="Koelling R.M."/>
            <person name="Scholler J."/>
            <person name="Fanslow W.C."/>
            <person name="Baum P.R."/>
            <person name="Derry J.M."/>
            <person name="Yan W."/>
        </authorList>
    </citation>
    <scope>INTERACTION WITH CRTAM</scope>
</reference>
<reference evidence="32" key="18">
    <citation type="journal article" date="2005" name="J. Immunol.">
        <title>The spermatogenic Ig superfamily/synaptic cell adhesion molecule mast-cell adhesion molecule promotes interaction with nerves.</title>
        <authorList>
            <person name="Furuno T."/>
            <person name="Ito A."/>
            <person name="Koma Y."/>
            <person name="Watabe K."/>
            <person name="Yokozaki H."/>
            <person name="Bienenstock J."/>
            <person name="Nakanishi M."/>
            <person name="Kitamura Y."/>
        </authorList>
    </citation>
    <scope>FUNCTION</scope>
</reference>
<reference evidence="32" key="19">
    <citation type="journal article" date="2005" name="J. Proteome Res.">
        <title>Human plasma N-glycoproteome analysis by immunoaffinity subtraction, hydrazide chemistry, and mass spectrometry.</title>
        <authorList>
            <person name="Liu T."/>
            <person name="Qian W.-J."/>
            <person name="Gritsenko M.A."/>
            <person name="Camp D.G. II"/>
            <person name="Monroe M.E."/>
            <person name="Moore R.J."/>
            <person name="Smith R.D."/>
        </authorList>
    </citation>
    <scope>GLYCOSYLATION [LARGE SCALE ANALYSIS] AT ASN-101 AND ASN-113</scope>
    <source>
        <tissue evidence="17">Plasma</tissue>
    </source>
</reference>
<reference key="20">
    <citation type="journal article" date="2009" name="J. Proteome Res.">
        <title>Glycoproteomics analysis of human liver tissue by combination of multiple enzyme digestion and hydrazide chemistry.</title>
        <authorList>
            <person name="Chen R."/>
            <person name="Jiang X."/>
            <person name="Sun D."/>
            <person name="Han G."/>
            <person name="Wang F."/>
            <person name="Ye M."/>
            <person name="Wang L."/>
            <person name="Zou H."/>
        </authorList>
    </citation>
    <scope>GLYCOSYLATION [LARGE SCALE ANALYSIS] AT ASN-101 AND ASN-113</scope>
    <source>
        <tissue>Liver</tissue>
    </source>
</reference>
<reference key="21">
    <citation type="journal article" date="2009" name="Nat. Biotechnol.">
        <title>Mass-spectrometric identification and relative quantification of N-linked cell surface glycoproteins.</title>
        <authorList>
            <person name="Wollscheid B."/>
            <person name="Bausch-Fluck D."/>
            <person name="Henderson C."/>
            <person name="O'Brien R."/>
            <person name="Bibel M."/>
            <person name="Schiess R."/>
            <person name="Aebersold R."/>
            <person name="Watts J.D."/>
        </authorList>
    </citation>
    <scope>GLYCOSYLATION [LARGE SCALE ANALYSIS] AT ASN-101 AND ASN-113</scope>
    <source>
        <tissue>Leukemic T-cell</tissue>
    </source>
</reference>
<reference key="22">
    <citation type="journal article" date="2011" name="BMC Syst. Biol.">
        <title>Initial characterization of the human central proteome.</title>
        <authorList>
            <person name="Burkard T.R."/>
            <person name="Planyavsky M."/>
            <person name="Kaupe I."/>
            <person name="Breitwieser F.P."/>
            <person name="Buerckstuemmer T."/>
            <person name="Bennett K.L."/>
            <person name="Superti-Furga G."/>
            <person name="Colinge J."/>
        </authorList>
    </citation>
    <scope>IDENTIFICATION BY MASS SPECTROMETRY [LARGE SCALE ANALYSIS]</scope>
</reference>
<reference key="23">
    <citation type="journal article" date="2014" name="PLoS ONE">
        <title>Trans-homophilic interaction of CADM1 activates PI3K by forming a complex with MAGuK-family proteins MPP3 and Dlg.</title>
        <authorList>
            <person name="Murakami S."/>
            <person name="Sakurai-Yageta M."/>
            <person name="Maruyama T."/>
            <person name="Murakami Y."/>
        </authorList>
    </citation>
    <scope>INTERACTION WITH MPP3</scope>
</reference>
<reference key="24">
    <citation type="journal article" date="2014" name="PLoS ONE">
        <title>Trans-homophilic interaction of CADM1 activates PI3K by forming a complex with MAGuK-family proteins MPP3 and Dlg.</title>
        <authorList>
            <person name="Murakami S."/>
            <person name="Sakurai-Yageta M."/>
            <person name="Maruyama T."/>
            <person name="Murakami Y."/>
        </authorList>
    </citation>
    <scope>ERRATUM OF PUBMED:24503895</scope>
</reference>
<reference key="25">
    <citation type="journal article" date="2018" name="PLoS Pathog.">
        <title>CADM1 is essential for KSHV-encoded vGPCR-and vFLIP-mediated chronic NF-kappaB activation.</title>
        <authorList>
            <person name="Hunte R."/>
            <person name="Alonso P."/>
            <person name="Thomas R."/>
            <person name="Bazile C.A."/>
            <person name="Ramos J.C."/>
            <person name="van der Weyden L."/>
            <person name="Dominguez-Bendala J."/>
            <person name="Khan W.N."/>
            <person name="Shembade N."/>
        </authorList>
    </citation>
    <scope>INTERACTION WITH HERPES VIRUS 8 PROTEINS VFLIP AND VGPCR (MICROBIAL INFECTION)</scope>
    <scope>FUNCTION (MICROBIAL INFECTION)</scope>
</reference>
<reference key="26">
    <citation type="journal article" date="2023" name="J. Virol.">
        <title>Interaction of the Hemagglutinin Stalk Region with Cell Adhesion Molecule (CADM) 1 and CADM2 Mediates the Spread between Neurons and Neuropathogenicity of Measles Virus with a Hyperfusogenic Fusion Protein.</title>
        <authorList>
            <person name="Takemoto R."/>
            <person name="Hirai Y."/>
            <person name="Watanabe S."/>
            <person name="Harada H."/>
            <person name="Suzuki T."/>
            <person name="Hashiguchi T."/>
            <person name="Yanagi Y."/>
            <person name="Shirogane Y."/>
        </authorList>
    </citation>
    <scope>FUNCTION (MICROBIAL INFECTION)</scope>
</reference>
<reference key="27">
    <citation type="journal article" date="2011" name="J. Biol. Chem.">
        <title>Structural basis of tumor suppressor in lung cancer 1 (TSLC1) binding to differentially expressed in adenocarcinoma of the lung (DAL-1/4.1B).</title>
        <authorList>
            <person name="Busam R.D."/>
            <person name="Thorsell A.G."/>
            <person name="Flores A."/>
            <person name="Hammarstrom M."/>
            <person name="Persson C."/>
            <person name="Obrink B."/>
            <person name="Hallberg B.M."/>
        </authorList>
    </citation>
    <scope>X-RAY CRYSTALLOGRAPHY (2.3 ANGSTROMS) OF 400-411 IN COMPLEX WITH EPB41L3</scope>
    <scope>MUTAGENESIS OF TYR-406 AND THR-408</scope>
    <scope>INTERACTION WITH EPB41L3</scope>
</reference>
<reference evidence="37" key="28">
    <citation type="journal article" date="2013" name="Structure">
        <title>Competition of cell adhesion and immune recognition: insights into the interaction between CRTAM and nectin-like 2.</title>
        <authorList>
            <person name="Zhang S."/>
            <person name="Lu G."/>
            <person name="Qi J."/>
            <person name="Li Y."/>
            <person name="Zhang Z."/>
            <person name="Zhang B."/>
            <person name="Fan Z."/>
            <person name="Yan J."/>
            <person name="Gao G.F."/>
        </authorList>
    </citation>
    <scope>X-RAY CRYSTALLOGRAPHY (1.70 ANGSTROMS) OF 45-144</scope>
    <scope>SUBUNIT</scope>
    <scope>INTERACTION WITH CRTAM</scope>
    <scope>DISULFIDE BOND</scope>
</reference>
<proteinExistence type="evidence at protein level"/>
<keyword id="KW-0002">3D-structure</keyword>
<keyword id="KW-0025">Alternative splicing</keyword>
<keyword id="KW-0053">Apoptosis</keyword>
<keyword id="KW-0130">Cell adhesion</keyword>
<keyword id="KW-1003">Cell membrane</keyword>
<keyword id="KW-0217">Developmental protein</keyword>
<keyword id="KW-0221">Differentiation</keyword>
<keyword id="KW-1015">Disulfide bond</keyword>
<keyword id="KW-0325">Glycoprotein</keyword>
<keyword id="KW-0945">Host-virus interaction</keyword>
<keyword id="KW-0391">Immunity</keyword>
<keyword id="KW-0393">Immunoglobulin domain</keyword>
<keyword id="KW-0472">Membrane</keyword>
<keyword id="KW-0597">Phosphoprotein</keyword>
<keyword id="KW-1267">Proteomics identification</keyword>
<keyword id="KW-1185">Reference proteome</keyword>
<keyword id="KW-0677">Repeat</keyword>
<keyword id="KW-0732">Signal</keyword>
<keyword id="KW-0744">Spermatogenesis</keyword>
<keyword id="KW-0770">Synapse</keyword>
<keyword id="KW-0812">Transmembrane</keyword>
<keyword id="KW-1133">Transmembrane helix</keyword>
<keyword id="KW-0043">Tumor suppressor</keyword>